<feature type="chain" id="PRO_1000069813" description="4-hydroxybenzoate octaprenyltransferase">
    <location>
        <begin position="1"/>
        <end position="290"/>
    </location>
</feature>
<feature type="transmembrane region" description="Helical" evidence="1">
    <location>
        <begin position="41"/>
        <end position="61"/>
    </location>
</feature>
<feature type="transmembrane region" description="Helical" evidence="1">
    <location>
        <begin position="89"/>
        <end position="109"/>
    </location>
</feature>
<feature type="transmembrane region" description="Helical" evidence="1">
    <location>
        <begin position="133"/>
        <end position="153"/>
    </location>
</feature>
<feature type="transmembrane region" description="Helical" evidence="1">
    <location>
        <begin position="158"/>
        <end position="178"/>
    </location>
</feature>
<feature type="transmembrane region" description="Helical" evidence="1">
    <location>
        <begin position="202"/>
        <end position="224"/>
    </location>
</feature>
<feature type="transmembrane region" description="Helical" evidence="1">
    <location>
        <begin position="269"/>
        <end position="289"/>
    </location>
</feature>
<proteinExistence type="inferred from homology"/>
<comment type="function">
    <text evidence="1">Catalyzes the prenylation of para-hydroxybenzoate (PHB) with an all-trans polyprenyl group. Mediates the second step in the final reaction sequence of ubiquinone-8 (UQ-8) biosynthesis, which is the condensation of the polyisoprenoid side chain with PHB, generating the first membrane-bound Q intermediate 3-octaprenyl-4-hydroxybenzoate.</text>
</comment>
<comment type="catalytic activity">
    <reaction evidence="1">
        <text>all-trans-octaprenyl diphosphate + 4-hydroxybenzoate = 4-hydroxy-3-(all-trans-octaprenyl)benzoate + diphosphate</text>
        <dbReference type="Rhea" id="RHEA:27782"/>
        <dbReference type="ChEBI" id="CHEBI:1617"/>
        <dbReference type="ChEBI" id="CHEBI:17879"/>
        <dbReference type="ChEBI" id="CHEBI:33019"/>
        <dbReference type="ChEBI" id="CHEBI:57711"/>
        <dbReference type="EC" id="2.5.1.39"/>
    </reaction>
</comment>
<comment type="cofactor">
    <cofactor evidence="1">
        <name>Mg(2+)</name>
        <dbReference type="ChEBI" id="CHEBI:18420"/>
    </cofactor>
</comment>
<comment type="pathway">
    <text evidence="1">Cofactor biosynthesis; ubiquinone biosynthesis.</text>
</comment>
<comment type="subcellular location">
    <subcellularLocation>
        <location evidence="1">Cell inner membrane</location>
        <topology evidence="1">Multi-pass membrane protein</topology>
    </subcellularLocation>
</comment>
<comment type="similarity">
    <text evidence="1">Belongs to the UbiA prenyltransferase family.</text>
</comment>
<name>UBIA_BURVG</name>
<accession>A4JBP9</accession>
<protein>
    <recommendedName>
        <fullName evidence="1">4-hydroxybenzoate octaprenyltransferase</fullName>
        <ecNumber evidence="1">2.5.1.39</ecNumber>
    </recommendedName>
    <alternativeName>
        <fullName evidence="1">4-HB polyprenyltransferase</fullName>
    </alternativeName>
</protein>
<reference key="1">
    <citation type="submission" date="2007-03" db="EMBL/GenBank/DDBJ databases">
        <title>Complete sequence of chromosome 1 of Burkholderia vietnamiensis G4.</title>
        <authorList>
            <consortium name="US DOE Joint Genome Institute"/>
            <person name="Copeland A."/>
            <person name="Lucas S."/>
            <person name="Lapidus A."/>
            <person name="Barry K."/>
            <person name="Detter J.C."/>
            <person name="Glavina del Rio T."/>
            <person name="Hammon N."/>
            <person name="Israni S."/>
            <person name="Dalin E."/>
            <person name="Tice H."/>
            <person name="Pitluck S."/>
            <person name="Chain P."/>
            <person name="Malfatti S."/>
            <person name="Shin M."/>
            <person name="Vergez L."/>
            <person name="Schmutz J."/>
            <person name="Larimer F."/>
            <person name="Land M."/>
            <person name="Hauser L."/>
            <person name="Kyrpides N."/>
            <person name="Tiedje J."/>
            <person name="Richardson P."/>
        </authorList>
    </citation>
    <scope>NUCLEOTIDE SEQUENCE [LARGE SCALE GENOMIC DNA]</scope>
    <source>
        <strain>G4 / LMG 22486</strain>
    </source>
</reference>
<dbReference type="EC" id="2.5.1.39" evidence="1"/>
<dbReference type="EMBL" id="CP000614">
    <property type="protein sequence ID" value="ABO53702.1"/>
    <property type="molecule type" value="Genomic_DNA"/>
</dbReference>
<dbReference type="SMR" id="A4JBP9"/>
<dbReference type="KEGG" id="bvi:Bcep1808_0690"/>
<dbReference type="eggNOG" id="COG0382">
    <property type="taxonomic scope" value="Bacteria"/>
</dbReference>
<dbReference type="HOGENOM" id="CLU_034879_1_0_4"/>
<dbReference type="UniPathway" id="UPA00232"/>
<dbReference type="Proteomes" id="UP000002287">
    <property type="component" value="Chromosome 1"/>
</dbReference>
<dbReference type="GO" id="GO:0005886">
    <property type="term" value="C:plasma membrane"/>
    <property type="evidence" value="ECO:0007669"/>
    <property type="project" value="UniProtKB-SubCell"/>
</dbReference>
<dbReference type="GO" id="GO:0008412">
    <property type="term" value="F:4-hydroxybenzoate polyprenyltransferase activity"/>
    <property type="evidence" value="ECO:0007669"/>
    <property type="project" value="UniProtKB-UniRule"/>
</dbReference>
<dbReference type="GO" id="GO:0006744">
    <property type="term" value="P:ubiquinone biosynthetic process"/>
    <property type="evidence" value="ECO:0007669"/>
    <property type="project" value="UniProtKB-UniRule"/>
</dbReference>
<dbReference type="CDD" id="cd13959">
    <property type="entry name" value="PT_UbiA_COQ2"/>
    <property type="match status" value="1"/>
</dbReference>
<dbReference type="FunFam" id="1.10.357.140:FF:000002">
    <property type="entry name" value="4-hydroxybenzoate octaprenyltransferase"/>
    <property type="match status" value="1"/>
</dbReference>
<dbReference type="FunFam" id="1.20.120.1780:FF:000001">
    <property type="entry name" value="4-hydroxybenzoate octaprenyltransferase"/>
    <property type="match status" value="1"/>
</dbReference>
<dbReference type="Gene3D" id="1.10.357.140">
    <property type="entry name" value="UbiA prenyltransferase"/>
    <property type="match status" value="1"/>
</dbReference>
<dbReference type="Gene3D" id="1.20.120.1780">
    <property type="entry name" value="UbiA prenyltransferase"/>
    <property type="match status" value="1"/>
</dbReference>
<dbReference type="HAMAP" id="MF_01635">
    <property type="entry name" value="UbiA"/>
    <property type="match status" value="1"/>
</dbReference>
<dbReference type="InterPro" id="IPR006370">
    <property type="entry name" value="HB_polyprenyltransferase-like"/>
</dbReference>
<dbReference type="InterPro" id="IPR039653">
    <property type="entry name" value="Prenyltransferase"/>
</dbReference>
<dbReference type="InterPro" id="IPR000537">
    <property type="entry name" value="UbiA_prenyltransferase"/>
</dbReference>
<dbReference type="InterPro" id="IPR030470">
    <property type="entry name" value="UbiA_prenylTrfase_CS"/>
</dbReference>
<dbReference type="InterPro" id="IPR044878">
    <property type="entry name" value="UbiA_sf"/>
</dbReference>
<dbReference type="NCBIfam" id="TIGR01474">
    <property type="entry name" value="ubiA_proteo"/>
    <property type="match status" value="1"/>
</dbReference>
<dbReference type="PANTHER" id="PTHR11048:SF28">
    <property type="entry name" value="4-HYDROXYBENZOATE POLYPRENYLTRANSFERASE, MITOCHONDRIAL"/>
    <property type="match status" value="1"/>
</dbReference>
<dbReference type="PANTHER" id="PTHR11048">
    <property type="entry name" value="PRENYLTRANSFERASES"/>
    <property type="match status" value="1"/>
</dbReference>
<dbReference type="Pfam" id="PF01040">
    <property type="entry name" value="UbiA"/>
    <property type="match status" value="1"/>
</dbReference>
<dbReference type="PROSITE" id="PS00943">
    <property type="entry name" value="UBIA"/>
    <property type="match status" value="1"/>
</dbReference>
<keyword id="KW-0997">Cell inner membrane</keyword>
<keyword id="KW-1003">Cell membrane</keyword>
<keyword id="KW-0460">Magnesium</keyword>
<keyword id="KW-0472">Membrane</keyword>
<keyword id="KW-0808">Transferase</keyword>
<keyword id="KW-0812">Transmembrane</keyword>
<keyword id="KW-1133">Transmembrane helix</keyword>
<keyword id="KW-0831">Ubiquinone biosynthesis</keyword>
<evidence type="ECO:0000255" key="1">
    <source>
        <dbReference type="HAMAP-Rule" id="MF_01635"/>
    </source>
</evidence>
<gene>
    <name evidence="1" type="primary">ubiA</name>
    <name type="ordered locus">Bcep1808_0690</name>
</gene>
<organism>
    <name type="scientific">Burkholderia vietnamiensis (strain G4 / LMG 22486)</name>
    <name type="common">Burkholderia cepacia (strain R1808)</name>
    <dbReference type="NCBI Taxonomy" id="269482"/>
    <lineage>
        <taxon>Bacteria</taxon>
        <taxon>Pseudomonadati</taxon>
        <taxon>Pseudomonadota</taxon>
        <taxon>Betaproteobacteria</taxon>
        <taxon>Burkholderiales</taxon>
        <taxon>Burkholderiaceae</taxon>
        <taxon>Burkholderia</taxon>
        <taxon>Burkholderia cepacia complex</taxon>
    </lineage>
</organism>
<sequence>MLARFPLYLRLVRMDKPIGSLLLLWPTLNALWIASDGRPRWPLVAIFALGTLLMRSAGCAMNDYADRDFDRHVKRTADRPLTSGKIRAWEAVAIAAVLSFVAFLLILPLNTLTKELSVVALFVAGSYPFMKRFFAIPQAYLGIAFGFGIPMAFAAVQGTVPALAWVMLVANVFWSVAYDTEYAMVDRDDDIKIGIRTSALTFGRFDVAAIMLCYAVTLGIYAWIGATLGFGLAFWAGWAAALGCALYHYTLIKDRERMPCFAAFRHNNWLGGVLFAGIAAHYLVAGAAGN</sequence>